<gene>
    <name evidence="1" type="primary">allA</name>
    <name type="ordered locus">Z0659</name>
    <name type="ordered locus">ECs0566</name>
</gene>
<comment type="function">
    <text evidence="1">Catalyzes the catabolism of the allantoin degradation intermediate (S)-ureidoglycolate, generating urea and glyoxylate. Involved in the anaerobic utilization of allantoin as sole nitrogen source. Reinforces the induction of genes involved in the degradation of allantoin and glyoxylate by producing glyoxylate.</text>
</comment>
<comment type="catalytic activity">
    <reaction evidence="1">
        <text>(S)-ureidoglycolate = urea + glyoxylate</text>
        <dbReference type="Rhea" id="RHEA:11304"/>
        <dbReference type="ChEBI" id="CHEBI:16199"/>
        <dbReference type="ChEBI" id="CHEBI:36655"/>
        <dbReference type="ChEBI" id="CHEBI:57296"/>
        <dbReference type="EC" id="4.3.2.3"/>
    </reaction>
</comment>
<comment type="cofactor">
    <cofactor evidence="1">
        <name>Ni(2+)</name>
        <dbReference type="ChEBI" id="CHEBI:49786"/>
    </cofactor>
</comment>
<comment type="pathway">
    <text evidence="1">Nitrogen metabolism; (S)-allantoin degradation.</text>
</comment>
<comment type="subunit">
    <text evidence="1 2">Homodimer.</text>
</comment>
<comment type="similarity">
    <text evidence="1">Belongs to the ureidoglycolate lyase family.</text>
</comment>
<sequence length="160" mass="18223">MKLQVLPLSQEAFSAYGDVIETQQRDFFHINNGLVERYHDLALVEILEQDRTLISINRAQPANLPLTIHELERHPLGTQAFIPMKGEVFVVVVALGDDKPDLSTLRAFITNGEQGVNYHRNVWHHPLFAWQRVTDFLTIDRGGSDNCDVESIPEQELCFA</sequence>
<dbReference type="EC" id="4.3.2.3" evidence="1"/>
<dbReference type="EMBL" id="AE005174">
    <property type="protein sequence ID" value="AAG54861.1"/>
    <property type="molecule type" value="Genomic_DNA"/>
</dbReference>
<dbReference type="EMBL" id="BA000007">
    <property type="protein sequence ID" value="BAB33989.1"/>
    <property type="molecule type" value="Genomic_DNA"/>
</dbReference>
<dbReference type="PIR" id="A85550">
    <property type="entry name" value="A85550"/>
</dbReference>
<dbReference type="PIR" id="F90699">
    <property type="entry name" value="F90699"/>
</dbReference>
<dbReference type="RefSeq" id="NP_308593.1">
    <property type="nucleotide sequence ID" value="NC_002695.1"/>
</dbReference>
<dbReference type="RefSeq" id="WP_000776388.1">
    <property type="nucleotide sequence ID" value="NZ_VOAI01000030.1"/>
</dbReference>
<dbReference type="PDB" id="1YQC">
    <property type="method" value="X-ray"/>
    <property type="resolution" value="1.71 A"/>
    <property type="chains" value="A/B=1-160"/>
</dbReference>
<dbReference type="PDBsum" id="1YQC"/>
<dbReference type="SMR" id="P63486"/>
<dbReference type="STRING" id="155864.Z0659"/>
<dbReference type="GeneID" id="75202348"/>
<dbReference type="GeneID" id="915530"/>
<dbReference type="KEGG" id="ece:Z0659"/>
<dbReference type="KEGG" id="ecs:ECs_0566"/>
<dbReference type="PATRIC" id="fig|386585.9.peg.674"/>
<dbReference type="eggNOG" id="COG3194">
    <property type="taxonomic scope" value="Bacteria"/>
</dbReference>
<dbReference type="HOGENOM" id="CLU_070848_1_1_6"/>
<dbReference type="OMA" id="ECYFEPG"/>
<dbReference type="BRENDA" id="4.3.2.3">
    <property type="organism ID" value="2026"/>
</dbReference>
<dbReference type="UniPathway" id="UPA00395"/>
<dbReference type="EvolutionaryTrace" id="P63486"/>
<dbReference type="Proteomes" id="UP000000558">
    <property type="component" value="Chromosome"/>
</dbReference>
<dbReference type="Proteomes" id="UP000002519">
    <property type="component" value="Chromosome"/>
</dbReference>
<dbReference type="GO" id="GO:0004848">
    <property type="term" value="F:ureidoglycolate hydrolase activity"/>
    <property type="evidence" value="ECO:0007669"/>
    <property type="project" value="InterPro"/>
</dbReference>
<dbReference type="GO" id="GO:0050385">
    <property type="term" value="F:ureidoglycolate lyase activity"/>
    <property type="evidence" value="ECO:0007669"/>
    <property type="project" value="UniProtKB-UniRule"/>
</dbReference>
<dbReference type="GO" id="GO:0000256">
    <property type="term" value="P:allantoin catabolic process"/>
    <property type="evidence" value="ECO:0007669"/>
    <property type="project" value="UniProtKB-UniRule"/>
</dbReference>
<dbReference type="GO" id="GO:0006145">
    <property type="term" value="P:purine nucleobase catabolic process"/>
    <property type="evidence" value="ECO:0007669"/>
    <property type="project" value="UniProtKB-UniRule"/>
</dbReference>
<dbReference type="CDD" id="cd20298">
    <property type="entry name" value="cupin_UAH"/>
    <property type="match status" value="1"/>
</dbReference>
<dbReference type="FunFam" id="2.60.120.480:FF:000001">
    <property type="entry name" value="Ureidoglycolate lyase"/>
    <property type="match status" value="1"/>
</dbReference>
<dbReference type="Gene3D" id="2.60.120.480">
    <property type="entry name" value="Ureidoglycolate hydrolase"/>
    <property type="match status" value="1"/>
</dbReference>
<dbReference type="HAMAP" id="MF_00616">
    <property type="entry name" value="Ureidogly_lyase"/>
    <property type="match status" value="1"/>
</dbReference>
<dbReference type="InterPro" id="IPR011051">
    <property type="entry name" value="RmlC_Cupin_sf"/>
</dbReference>
<dbReference type="InterPro" id="IPR047233">
    <property type="entry name" value="UAH_cupin"/>
</dbReference>
<dbReference type="InterPro" id="IPR007247">
    <property type="entry name" value="Ureidogly_lyase"/>
</dbReference>
<dbReference type="InterPro" id="IPR023525">
    <property type="entry name" value="Ureidogly_lyase_bac"/>
</dbReference>
<dbReference type="InterPro" id="IPR024060">
    <property type="entry name" value="Ureidoglycolate_lyase_dom_sf"/>
</dbReference>
<dbReference type="NCBIfam" id="NF002948">
    <property type="entry name" value="PRK03606.1-1"/>
    <property type="match status" value="1"/>
</dbReference>
<dbReference type="NCBIfam" id="NF009932">
    <property type="entry name" value="PRK13395.1"/>
    <property type="match status" value="1"/>
</dbReference>
<dbReference type="PANTHER" id="PTHR21221">
    <property type="entry name" value="UREIDOGLYCOLATE HYDROLASE"/>
    <property type="match status" value="1"/>
</dbReference>
<dbReference type="PANTHER" id="PTHR21221:SF1">
    <property type="entry name" value="UREIDOGLYCOLATE LYASE"/>
    <property type="match status" value="1"/>
</dbReference>
<dbReference type="Pfam" id="PF04115">
    <property type="entry name" value="Ureidogly_lyase"/>
    <property type="match status" value="1"/>
</dbReference>
<dbReference type="PIRSF" id="PIRSF017306">
    <property type="entry name" value="Ureidogly_hydro"/>
    <property type="match status" value="1"/>
</dbReference>
<dbReference type="SUPFAM" id="SSF51182">
    <property type="entry name" value="RmlC-like cupins"/>
    <property type="match status" value="1"/>
</dbReference>
<reference key="1">
    <citation type="journal article" date="2001" name="Nature">
        <title>Genome sequence of enterohaemorrhagic Escherichia coli O157:H7.</title>
        <authorList>
            <person name="Perna N.T."/>
            <person name="Plunkett G. III"/>
            <person name="Burland V."/>
            <person name="Mau B."/>
            <person name="Glasner J.D."/>
            <person name="Rose D.J."/>
            <person name="Mayhew G.F."/>
            <person name="Evans P.S."/>
            <person name="Gregor J."/>
            <person name="Kirkpatrick H.A."/>
            <person name="Posfai G."/>
            <person name="Hackett J."/>
            <person name="Klink S."/>
            <person name="Boutin A."/>
            <person name="Shao Y."/>
            <person name="Miller L."/>
            <person name="Grotbeck E.J."/>
            <person name="Davis N.W."/>
            <person name="Lim A."/>
            <person name="Dimalanta E.T."/>
            <person name="Potamousis K."/>
            <person name="Apodaca J."/>
            <person name="Anantharaman T.S."/>
            <person name="Lin J."/>
            <person name="Yen G."/>
            <person name="Schwartz D.C."/>
            <person name="Welch R.A."/>
            <person name="Blattner F.R."/>
        </authorList>
    </citation>
    <scope>NUCLEOTIDE SEQUENCE [LARGE SCALE GENOMIC DNA]</scope>
    <source>
        <strain>O157:H7 / EDL933 / ATCC 700927 / EHEC</strain>
    </source>
</reference>
<reference key="2">
    <citation type="journal article" date="2001" name="DNA Res.">
        <title>Complete genome sequence of enterohemorrhagic Escherichia coli O157:H7 and genomic comparison with a laboratory strain K-12.</title>
        <authorList>
            <person name="Hayashi T."/>
            <person name="Makino K."/>
            <person name="Ohnishi M."/>
            <person name="Kurokawa K."/>
            <person name="Ishii K."/>
            <person name="Yokoyama K."/>
            <person name="Han C.-G."/>
            <person name="Ohtsubo E."/>
            <person name="Nakayama K."/>
            <person name="Murata T."/>
            <person name="Tanaka M."/>
            <person name="Tobe T."/>
            <person name="Iida T."/>
            <person name="Takami H."/>
            <person name="Honda T."/>
            <person name="Sasakawa C."/>
            <person name="Ogasawara N."/>
            <person name="Yasunaga T."/>
            <person name="Kuhara S."/>
            <person name="Shiba T."/>
            <person name="Hattori M."/>
            <person name="Shinagawa H."/>
        </authorList>
    </citation>
    <scope>NUCLEOTIDE SEQUENCE [LARGE SCALE GENOMIC DNA]</scope>
    <source>
        <strain>O157:H7 / Sakai / RIMD 0509952 / EHEC</strain>
    </source>
</reference>
<reference key="3">
    <citation type="journal article" date="2005" name="Proteins">
        <title>Crystal structure of ureidoglycolate hydrolase (AllA) from Escherichia coli O157:H7.</title>
        <authorList>
            <person name="Raymond S."/>
            <person name="Tocilj A."/>
            <person name="Ajamian E."/>
            <person name="Li Y."/>
            <person name="Hung M.-N."/>
            <person name="Matte A."/>
            <person name="Cygler M."/>
        </authorList>
    </citation>
    <scope>X-RAY CRYSTALLOGRAPHY (1.71 ANGSTROMS) IN COMPLEX WITH GLYOXYLATE</scope>
    <scope>SUBUNIT</scope>
</reference>
<proteinExistence type="evidence at protein level"/>
<keyword id="KW-0002">3D-structure</keyword>
<keyword id="KW-0456">Lyase</keyword>
<keyword id="KW-0659">Purine metabolism</keyword>
<keyword id="KW-1185">Reference proteome</keyword>
<protein>
    <recommendedName>
        <fullName evidence="1">Ureidoglycolate lyase</fullName>
        <ecNumber evidence="1">4.3.2.3</ecNumber>
    </recommendedName>
    <alternativeName>
        <fullName evidence="1">Ureidoglycolatase</fullName>
    </alternativeName>
</protein>
<name>ALLA_ECO57</name>
<evidence type="ECO:0000255" key="1">
    <source>
        <dbReference type="HAMAP-Rule" id="MF_00616"/>
    </source>
</evidence>
<evidence type="ECO:0000269" key="2">
    <source>
    </source>
</evidence>
<evidence type="ECO:0007829" key="3">
    <source>
        <dbReference type="PDB" id="1YQC"/>
    </source>
</evidence>
<accession>P63486</accession>
<accession>Q8XCX8</accession>
<organism>
    <name type="scientific">Escherichia coli O157:H7</name>
    <dbReference type="NCBI Taxonomy" id="83334"/>
    <lineage>
        <taxon>Bacteria</taxon>
        <taxon>Pseudomonadati</taxon>
        <taxon>Pseudomonadota</taxon>
        <taxon>Gammaproteobacteria</taxon>
        <taxon>Enterobacterales</taxon>
        <taxon>Enterobacteriaceae</taxon>
        <taxon>Escherichia</taxon>
    </lineage>
</organism>
<feature type="chain" id="PRO_0000120549" description="Ureidoglycolate lyase">
    <location>
        <begin position="1"/>
        <end position="160"/>
    </location>
</feature>
<feature type="strand" evidence="3">
    <location>
        <begin position="2"/>
        <end position="7"/>
    </location>
</feature>
<feature type="helix" evidence="3">
    <location>
        <begin position="10"/>
        <end position="13"/>
    </location>
</feature>
<feature type="turn" evidence="3">
    <location>
        <begin position="14"/>
        <end position="16"/>
    </location>
</feature>
<feature type="strand" evidence="3">
    <location>
        <begin position="17"/>
        <end position="20"/>
    </location>
</feature>
<feature type="strand" evidence="3">
    <location>
        <begin position="27"/>
        <end position="30"/>
    </location>
</feature>
<feature type="turn" evidence="3">
    <location>
        <begin position="31"/>
        <end position="34"/>
    </location>
</feature>
<feature type="strand" evidence="3">
    <location>
        <begin position="35"/>
        <end position="43"/>
    </location>
</feature>
<feature type="strand" evidence="3">
    <location>
        <begin position="46"/>
        <end position="48"/>
    </location>
</feature>
<feature type="helix" evidence="3">
    <location>
        <begin position="49"/>
        <end position="51"/>
    </location>
</feature>
<feature type="strand" evidence="3">
    <location>
        <begin position="53"/>
        <end position="59"/>
    </location>
</feature>
<feature type="strand" evidence="3">
    <location>
        <begin position="67"/>
        <end position="73"/>
    </location>
</feature>
<feature type="strand" evidence="3">
    <location>
        <begin position="79"/>
        <end position="86"/>
    </location>
</feature>
<feature type="strand" evidence="3">
    <location>
        <begin position="90"/>
        <end position="94"/>
    </location>
</feature>
<feature type="strand" evidence="3">
    <location>
        <begin position="97"/>
        <end position="99"/>
    </location>
</feature>
<feature type="strand" evidence="3">
    <location>
        <begin position="106"/>
        <end position="109"/>
    </location>
</feature>
<feature type="strand" evidence="3">
    <location>
        <begin position="115"/>
        <end position="118"/>
    </location>
</feature>
<feature type="strand" evidence="3">
    <location>
        <begin position="129"/>
        <end position="132"/>
    </location>
</feature>
<feature type="strand" evidence="3">
    <location>
        <begin position="134"/>
        <end position="140"/>
    </location>
</feature>
<feature type="strand" evidence="3">
    <location>
        <begin position="148"/>
        <end position="158"/>
    </location>
</feature>